<reference key="1">
    <citation type="submission" date="2007-04" db="EMBL/GenBank/DDBJ databases">
        <title>Complete genome sequence of the nitrogen-fixing bacterium Azorhizobium caulinodans ORS571.</title>
        <authorList>
            <person name="Lee K.B."/>
            <person name="Backer P.D."/>
            <person name="Aono T."/>
            <person name="Liu C.T."/>
            <person name="Suzuki S."/>
            <person name="Suzuki T."/>
            <person name="Kaneko T."/>
            <person name="Yamada M."/>
            <person name="Tabata S."/>
            <person name="Kupfer D.M."/>
            <person name="Najar F.Z."/>
            <person name="Wiley G.B."/>
            <person name="Roe B."/>
            <person name="Binnewies T."/>
            <person name="Ussery D."/>
            <person name="Vereecke D."/>
            <person name="Gevers D."/>
            <person name="Holsters M."/>
            <person name="Oyaizu H."/>
        </authorList>
    </citation>
    <scope>NUCLEOTIDE SEQUENCE [LARGE SCALE GENOMIC DNA]</scope>
    <source>
        <strain>ATCC 43989 / DSM 5975 / JCM 20966 / LMG 6465 / NBRC 14845 / NCIMB 13405 / ORS 571</strain>
    </source>
</reference>
<protein>
    <recommendedName>
        <fullName evidence="1">DNA-directed RNA polymerase subunit beta</fullName>
        <shortName evidence="1">RNAP subunit beta</shortName>
        <ecNumber evidence="1">2.7.7.6</ecNumber>
    </recommendedName>
    <alternativeName>
        <fullName evidence="1">RNA polymerase subunit beta</fullName>
    </alternativeName>
    <alternativeName>
        <fullName evidence="1">Transcriptase subunit beta</fullName>
    </alternativeName>
</protein>
<dbReference type="EC" id="2.7.7.6" evidence="1"/>
<dbReference type="EMBL" id="AP009384">
    <property type="protein sequence ID" value="BAF86885.1"/>
    <property type="molecule type" value="Genomic_DNA"/>
</dbReference>
<dbReference type="RefSeq" id="WP_012169418.1">
    <property type="nucleotide sequence ID" value="NC_009937.1"/>
</dbReference>
<dbReference type="SMR" id="A8HTY8"/>
<dbReference type="STRING" id="438753.AZC_0887"/>
<dbReference type="KEGG" id="azc:AZC_0887"/>
<dbReference type="eggNOG" id="COG0085">
    <property type="taxonomic scope" value="Bacteria"/>
</dbReference>
<dbReference type="HOGENOM" id="CLU_000524_4_3_5"/>
<dbReference type="Proteomes" id="UP000000270">
    <property type="component" value="Chromosome"/>
</dbReference>
<dbReference type="GO" id="GO:0000428">
    <property type="term" value="C:DNA-directed RNA polymerase complex"/>
    <property type="evidence" value="ECO:0007669"/>
    <property type="project" value="UniProtKB-KW"/>
</dbReference>
<dbReference type="GO" id="GO:0003677">
    <property type="term" value="F:DNA binding"/>
    <property type="evidence" value="ECO:0007669"/>
    <property type="project" value="UniProtKB-UniRule"/>
</dbReference>
<dbReference type="GO" id="GO:0003899">
    <property type="term" value="F:DNA-directed RNA polymerase activity"/>
    <property type="evidence" value="ECO:0007669"/>
    <property type="project" value="UniProtKB-UniRule"/>
</dbReference>
<dbReference type="GO" id="GO:0032549">
    <property type="term" value="F:ribonucleoside binding"/>
    <property type="evidence" value="ECO:0007669"/>
    <property type="project" value="InterPro"/>
</dbReference>
<dbReference type="GO" id="GO:0006351">
    <property type="term" value="P:DNA-templated transcription"/>
    <property type="evidence" value="ECO:0007669"/>
    <property type="project" value="UniProtKB-UniRule"/>
</dbReference>
<dbReference type="CDD" id="cd00653">
    <property type="entry name" value="RNA_pol_B_RPB2"/>
    <property type="match status" value="1"/>
</dbReference>
<dbReference type="FunFam" id="2.40.50.100:FF:000006">
    <property type="entry name" value="DNA-directed RNA polymerase subunit beta"/>
    <property type="match status" value="1"/>
</dbReference>
<dbReference type="FunFam" id="3.90.1800.10:FF:000001">
    <property type="entry name" value="DNA-directed RNA polymerase subunit beta"/>
    <property type="match status" value="1"/>
</dbReference>
<dbReference type="Gene3D" id="2.40.50.100">
    <property type="match status" value="1"/>
</dbReference>
<dbReference type="Gene3D" id="2.40.50.150">
    <property type="match status" value="1"/>
</dbReference>
<dbReference type="Gene3D" id="3.90.1100.10">
    <property type="match status" value="2"/>
</dbReference>
<dbReference type="Gene3D" id="6.10.140.1670">
    <property type="match status" value="1"/>
</dbReference>
<dbReference type="Gene3D" id="2.30.150.10">
    <property type="entry name" value="DNA-directed RNA polymerase, beta subunit, external 1 domain"/>
    <property type="match status" value="1"/>
</dbReference>
<dbReference type="Gene3D" id="2.40.270.10">
    <property type="entry name" value="DNA-directed RNA polymerase, subunit 2, domain 6"/>
    <property type="match status" value="1"/>
</dbReference>
<dbReference type="Gene3D" id="3.90.1800.10">
    <property type="entry name" value="RNA polymerase alpha subunit dimerisation domain"/>
    <property type="match status" value="1"/>
</dbReference>
<dbReference type="Gene3D" id="3.90.1110.10">
    <property type="entry name" value="RNA polymerase Rpb2, domain 2"/>
    <property type="match status" value="1"/>
</dbReference>
<dbReference type="HAMAP" id="MF_01321">
    <property type="entry name" value="RNApol_bact_RpoB"/>
    <property type="match status" value="1"/>
</dbReference>
<dbReference type="InterPro" id="IPR042107">
    <property type="entry name" value="DNA-dir_RNA_pol_bsu_ext_1_sf"/>
</dbReference>
<dbReference type="InterPro" id="IPR019462">
    <property type="entry name" value="DNA-dir_RNA_pol_bsu_external_1"/>
</dbReference>
<dbReference type="InterPro" id="IPR015712">
    <property type="entry name" value="DNA-dir_RNA_pol_su2"/>
</dbReference>
<dbReference type="InterPro" id="IPR007120">
    <property type="entry name" value="DNA-dir_RNAP_su2_dom"/>
</dbReference>
<dbReference type="InterPro" id="IPR037033">
    <property type="entry name" value="DNA-dir_RNAP_su2_hyb_sf"/>
</dbReference>
<dbReference type="InterPro" id="IPR010243">
    <property type="entry name" value="RNA_pol_bsu_bac"/>
</dbReference>
<dbReference type="InterPro" id="IPR007121">
    <property type="entry name" value="RNA_pol_bsu_CS"/>
</dbReference>
<dbReference type="InterPro" id="IPR007644">
    <property type="entry name" value="RNA_pol_bsu_protrusion"/>
</dbReference>
<dbReference type="InterPro" id="IPR007642">
    <property type="entry name" value="RNA_pol_Rpb2_2"/>
</dbReference>
<dbReference type="InterPro" id="IPR037034">
    <property type="entry name" value="RNA_pol_Rpb2_2_sf"/>
</dbReference>
<dbReference type="InterPro" id="IPR007645">
    <property type="entry name" value="RNA_pol_Rpb2_3"/>
</dbReference>
<dbReference type="InterPro" id="IPR007641">
    <property type="entry name" value="RNA_pol_Rpb2_7"/>
</dbReference>
<dbReference type="InterPro" id="IPR014724">
    <property type="entry name" value="RNA_pol_RPB2_OB-fold"/>
</dbReference>
<dbReference type="NCBIfam" id="NF001616">
    <property type="entry name" value="PRK00405.1"/>
    <property type="match status" value="1"/>
</dbReference>
<dbReference type="NCBIfam" id="TIGR02013">
    <property type="entry name" value="rpoB"/>
    <property type="match status" value="1"/>
</dbReference>
<dbReference type="PANTHER" id="PTHR20856">
    <property type="entry name" value="DNA-DIRECTED RNA POLYMERASE I SUBUNIT 2"/>
    <property type="match status" value="1"/>
</dbReference>
<dbReference type="Pfam" id="PF04563">
    <property type="entry name" value="RNA_pol_Rpb2_1"/>
    <property type="match status" value="1"/>
</dbReference>
<dbReference type="Pfam" id="PF04561">
    <property type="entry name" value="RNA_pol_Rpb2_2"/>
    <property type="match status" value="2"/>
</dbReference>
<dbReference type="Pfam" id="PF04565">
    <property type="entry name" value="RNA_pol_Rpb2_3"/>
    <property type="match status" value="1"/>
</dbReference>
<dbReference type="Pfam" id="PF10385">
    <property type="entry name" value="RNA_pol_Rpb2_45"/>
    <property type="match status" value="1"/>
</dbReference>
<dbReference type="Pfam" id="PF00562">
    <property type="entry name" value="RNA_pol_Rpb2_6"/>
    <property type="match status" value="1"/>
</dbReference>
<dbReference type="Pfam" id="PF04560">
    <property type="entry name" value="RNA_pol_Rpb2_7"/>
    <property type="match status" value="1"/>
</dbReference>
<dbReference type="SUPFAM" id="SSF64484">
    <property type="entry name" value="beta and beta-prime subunits of DNA dependent RNA-polymerase"/>
    <property type="match status" value="1"/>
</dbReference>
<dbReference type="PROSITE" id="PS01166">
    <property type="entry name" value="RNA_POL_BETA"/>
    <property type="match status" value="1"/>
</dbReference>
<feature type="chain" id="PRO_0000329164" description="DNA-directed RNA polymerase subunit beta">
    <location>
        <begin position="1"/>
        <end position="1376"/>
    </location>
</feature>
<feature type="region of interest" description="Disordered" evidence="2">
    <location>
        <begin position="1357"/>
        <end position="1376"/>
    </location>
</feature>
<feature type="compositionally biased region" description="Polar residues" evidence="2">
    <location>
        <begin position="1357"/>
        <end position="1368"/>
    </location>
</feature>
<keyword id="KW-0240">DNA-directed RNA polymerase</keyword>
<keyword id="KW-0548">Nucleotidyltransferase</keyword>
<keyword id="KW-1185">Reference proteome</keyword>
<keyword id="KW-0804">Transcription</keyword>
<keyword id="KW-0808">Transferase</keyword>
<sequence>MAQTFTGRKRIRKFFGKIKEVAEMPNLIEVQKASYDQFLQIEEPKGGRADDGLQAVFKSVFPISDFSGAAMLEFVRYEFEPPKYDVDECRQRGMTFAAPLKVTLRLIVFDVDPDTGAKSVKDIKEQDVYTGDIPLMTMNGTFIVNGTERVIVSQMHRSPGVFFDHDKGKTHSSGKLLFAARIIPYRGSWLDIEFDAKDIVYARIDRRRKIPVTSLLFALGLDSEEILNTFYEKILYTRAKDGWRMPFDPKRMKGYKAVADLIDADTGEVVVEAGKKLTVRAARQLVEKGLKALKISDDEMVGQYIGEDIVNVHTGEIYAEAGEEITEKVLKTLGDAGFDEIPVLDIDHINTGAYIRNTLSADKNSSREEALFDIYRVMRPGEPPTLDSAQAMFHSLFFDAERYDLSAVGRVKMNMRLDLDAEDTVRILRREDILAVIKTLVELRDGKGEIDDIDHLGNRRVRSVGELMENQYRVGLLRMERAIKERMSSVDIDTVMPQDLINAKPVAAAVREFFGSSQLSQFMDQTNPLSEITHKRRLSALGPGGLTRERAGFEVRDVHPTHYGRICPIETPEGPNIGLINSLATFARVNKYGFIEAPYRRVVDGRVTDEVVYLSAMEEGKYYVAQANVPLDTDGRFQEDLVICRHAGDVLVVSPDRVDFMDVSPKQLVSVAAALIPFLENDDANRALMGSNMQRQAVPLVRSQAPLVGTGMEAVVARDSGAAIAARRAGVIDQVDATRIVIRATGETDPSKSGVDIYRLMKFQRSNQSTCINQRPLVRVGDVVKKGDIIADGPSTELGELALGRNVLVAFMPWNGYNYEDSILLSENIVKEDVFTSIHIEEFEAMARDTKLGPEEITRDIPNVSEEALKNLDEAGIVYIGAEVRAGDILVGKITPKGESPMTPEEKLLRAIFGEKAADVRDTSLRLPPGTTGTIVEVRVFNRHGVDKDERALAIEREEIERLAKDRDDEQAILDRNVYGRLSEMLVGKVAIAGPKAFKKDTEITKDALGEYPRSQWWLFAVADDALMSELEAIRAQYDESKKRLEQRFLDKVEKLQRGDELPPGVMKMVKVFVAVKRKIQPGDKMAGRHGNKGVVSRIVPVEDMPFLEDGTNVDIVLNPLGVPSRMNVGQILETHLGWACAGLGRQVAAAVDAYYGSKDQQVLRNALVKVYGPDDIEVLDEKQITELGENLRKGVPMATPVFDGAHEADIEEHLEKAGLNPSGQSTLFDGRTGEPFDRKVTVGYIYMLKLHHLVDDKIHARSIGPYSLVTQQPLGGKAQFGGQRFGEMEVWALEAYGAAYTLQEMLTVKSDDVAGRTKVYEAIVRGEDTFESGIPESFNVLVKEMRSLGLNVELLNSKTGRQTNPGTRENLPAAE</sequence>
<name>RPOB_AZOC5</name>
<comment type="function">
    <text evidence="1">DNA-dependent RNA polymerase catalyzes the transcription of DNA into RNA using the four ribonucleoside triphosphates as substrates.</text>
</comment>
<comment type="catalytic activity">
    <reaction evidence="1">
        <text>RNA(n) + a ribonucleoside 5'-triphosphate = RNA(n+1) + diphosphate</text>
        <dbReference type="Rhea" id="RHEA:21248"/>
        <dbReference type="Rhea" id="RHEA-COMP:14527"/>
        <dbReference type="Rhea" id="RHEA-COMP:17342"/>
        <dbReference type="ChEBI" id="CHEBI:33019"/>
        <dbReference type="ChEBI" id="CHEBI:61557"/>
        <dbReference type="ChEBI" id="CHEBI:140395"/>
        <dbReference type="EC" id="2.7.7.6"/>
    </reaction>
</comment>
<comment type="subunit">
    <text evidence="1">The RNAP catalytic core consists of 2 alpha, 1 beta, 1 beta' and 1 omega subunit. When a sigma factor is associated with the core the holoenzyme is formed, which can initiate transcription.</text>
</comment>
<comment type="similarity">
    <text evidence="1">Belongs to the RNA polymerase beta chain family.</text>
</comment>
<proteinExistence type="inferred from homology"/>
<evidence type="ECO:0000255" key="1">
    <source>
        <dbReference type="HAMAP-Rule" id="MF_01321"/>
    </source>
</evidence>
<evidence type="ECO:0000256" key="2">
    <source>
        <dbReference type="SAM" id="MobiDB-lite"/>
    </source>
</evidence>
<gene>
    <name evidence="1" type="primary">rpoB</name>
    <name type="ordered locus">AZC_0887</name>
</gene>
<organism>
    <name type="scientific">Azorhizobium caulinodans (strain ATCC 43989 / DSM 5975 / JCM 20966 / LMG 6465 / NBRC 14845 / NCIMB 13405 / ORS 571)</name>
    <dbReference type="NCBI Taxonomy" id="438753"/>
    <lineage>
        <taxon>Bacteria</taxon>
        <taxon>Pseudomonadati</taxon>
        <taxon>Pseudomonadota</taxon>
        <taxon>Alphaproteobacteria</taxon>
        <taxon>Hyphomicrobiales</taxon>
        <taxon>Xanthobacteraceae</taxon>
        <taxon>Azorhizobium</taxon>
    </lineage>
</organism>
<accession>A8HTY8</accession>